<keyword id="KW-0004">4Fe-4S</keyword>
<keyword id="KW-0997">Cell inner membrane</keyword>
<keyword id="KW-1003">Cell membrane</keyword>
<keyword id="KW-0249">Electron transport</keyword>
<keyword id="KW-0408">Iron</keyword>
<keyword id="KW-0411">Iron-sulfur</keyword>
<keyword id="KW-0472">Membrane</keyword>
<keyword id="KW-0479">Metal-binding</keyword>
<keyword id="KW-1185">Reference proteome</keyword>
<keyword id="KW-0677">Repeat</keyword>
<keyword id="KW-1278">Translocase</keyword>
<keyword id="KW-0813">Transport</keyword>
<reference key="1">
    <citation type="journal article" date="2009" name="PLoS Genet.">
        <title>Organised genome dynamics in the Escherichia coli species results in highly diverse adaptive paths.</title>
        <authorList>
            <person name="Touchon M."/>
            <person name="Hoede C."/>
            <person name="Tenaillon O."/>
            <person name="Barbe V."/>
            <person name="Baeriswyl S."/>
            <person name="Bidet P."/>
            <person name="Bingen E."/>
            <person name="Bonacorsi S."/>
            <person name="Bouchier C."/>
            <person name="Bouvet O."/>
            <person name="Calteau A."/>
            <person name="Chiapello H."/>
            <person name="Clermont O."/>
            <person name="Cruveiller S."/>
            <person name="Danchin A."/>
            <person name="Diard M."/>
            <person name="Dossat C."/>
            <person name="Karoui M.E."/>
            <person name="Frapy E."/>
            <person name="Garry L."/>
            <person name="Ghigo J.M."/>
            <person name="Gilles A.M."/>
            <person name="Johnson J."/>
            <person name="Le Bouguenec C."/>
            <person name="Lescat M."/>
            <person name="Mangenot S."/>
            <person name="Martinez-Jehanne V."/>
            <person name="Matic I."/>
            <person name="Nassif X."/>
            <person name="Oztas S."/>
            <person name="Petit M.A."/>
            <person name="Pichon C."/>
            <person name="Rouy Z."/>
            <person name="Ruf C.S."/>
            <person name="Schneider D."/>
            <person name="Tourret J."/>
            <person name="Vacherie B."/>
            <person name="Vallenet D."/>
            <person name="Medigue C."/>
            <person name="Rocha E.P.C."/>
            <person name="Denamur E."/>
        </authorList>
    </citation>
    <scope>NUCLEOTIDE SEQUENCE [LARGE SCALE GENOMIC DNA]</scope>
    <source>
        <strain>S88 / ExPEC</strain>
    </source>
</reference>
<name>RSXB_ECO45</name>
<comment type="function">
    <text evidence="1">Part of a membrane-bound complex that couples electron transfer with translocation of ions across the membrane. Required to maintain the reduced state of SoxR.</text>
</comment>
<comment type="cofactor">
    <cofactor evidence="1">
        <name>[4Fe-4S] cluster</name>
        <dbReference type="ChEBI" id="CHEBI:49883"/>
    </cofactor>
    <text evidence="1">Binds 3 [4Fe-4S] clusters.</text>
</comment>
<comment type="subunit">
    <text evidence="1">The complex is composed of six subunits: RsxA, RsxB, RsxC, RsxD, RsxE and RsxG.</text>
</comment>
<comment type="subcellular location">
    <subcellularLocation>
        <location evidence="1">Cell inner membrane</location>
    </subcellularLocation>
</comment>
<comment type="similarity">
    <text evidence="1">Belongs to the 4Fe4S bacterial-type ferredoxin family. RnfB subfamily.</text>
</comment>
<dbReference type="EC" id="7.-.-.-" evidence="1"/>
<dbReference type="EMBL" id="CU928161">
    <property type="protein sequence ID" value="CAR02989.1"/>
    <property type="molecule type" value="Genomic_DNA"/>
</dbReference>
<dbReference type="RefSeq" id="WP_000991809.1">
    <property type="nucleotide sequence ID" value="NC_011742.1"/>
</dbReference>
<dbReference type="GeneID" id="93775780"/>
<dbReference type="KEGG" id="ecz:ECS88_1676"/>
<dbReference type="HOGENOM" id="CLU_063448_2_0_6"/>
<dbReference type="Proteomes" id="UP000000747">
    <property type="component" value="Chromosome"/>
</dbReference>
<dbReference type="GO" id="GO:0005886">
    <property type="term" value="C:plasma membrane"/>
    <property type="evidence" value="ECO:0007669"/>
    <property type="project" value="UniProtKB-SubCell"/>
</dbReference>
<dbReference type="GO" id="GO:0051539">
    <property type="term" value="F:4 iron, 4 sulfur cluster binding"/>
    <property type="evidence" value="ECO:0007669"/>
    <property type="project" value="UniProtKB-UniRule"/>
</dbReference>
<dbReference type="GO" id="GO:0009055">
    <property type="term" value="F:electron transfer activity"/>
    <property type="evidence" value="ECO:0007669"/>
    <property type="project" value="InterPro"/>
</dbReference>
<dbReference type="GO" id="GO:0046872">
    <property type="term" value="F:metal ion binding"/>
    <property type="evidence" value="ECO:0007669"/>
    <property type="project" value="UniProtKB-KW"/>
</dbReference>
<dbReference type="GO" id="GO:0022900">
    <property type="term" value="P:electron transport chain"/>
    <property type="evidence" value="ECO:0007669"/>
    <property type="project" value="UniProtKB-UniRule"/>
</dbReference>
<dbReference type="FunFam" id="1.10.15.40:FF:000001">
    <property type="entry name" value="Ion-translocating oxidoreductase complex subunit B"/>
    <property type="match status" value="1"/>
</dbReference>
<dbReference type="Gene3D" id="3.30.70.20">
    <property type="match status" value="1"/>
</dbReference>
<dbReference type="Gene3D" id="1.10.15.40">
    <property type="entry name" value="Electron transport complex subunit B, putative Fe-S cluster"/>
    <property type="match status" value="1"/>
</dbReference>
<dbReference type="HAMAP" id="MF_00463">
    <property type="entry name" value="RsxB_RnfB"/>
    <property type="match status" value="1"/>
</dbReference>
<dbReference type="InterPro" id="IPR007202">
    <property type="entry name" value="4Fe-4S_dom"/>
</dbReference>
<dbReference type="InterPro" id="IPR017896">
    <property type="entry name" value="4Fe4S_Fe-S-bd"/>
</dbReference>
<dbReference type="InterPro" id="IPR017900">
    <property type="entry name" value="4Fe4S_Fe_S_CS"/>
</dbReference>
<dbReference type="InterPro" id="IPR050395">
    <property type="entry name" value="4Fe4S_Ferredoxin_RnfB"/>
</dbReference>
<dbReference type="InterPro" id="IPR010207">
    <property type="entry name" value="Elect_transpt_cplx_RnfB/RsxB"/>
</dbReference>
<dbReference type="InterPro" id="IPR016463">
    <property type="entry name" value="RnfB/RsxB_Proteobac"/>
</dbReference>
<dbReference type="NCBIfam" id="NF003475">
    <property type="entry name" value="PRK05113.1"/>
    <property type="match status" value="1"/>
</dbReference>
<dbReference type="NCBIfam" id="TIGR01944">
    <property type="entry name" value="rnfB"/>
    <property type="match status" value="1"/>
</dbReference>
<dbReference type="PANTHER" id="PTHR43560">
    <property type="entry name" value="ION-TRANSLOCATING OXIDOREDUCTASE COMPLEX SUBUNIT B"/>
    <property type="match status" value="1"/>
</dbReference>
<dbReference type="PANTHER" id="PTHR43560:SF1">
    <property type="entry name" value="ION-TRANSLOCATING OXIDOREDUCTASE COMPLEX SUBUNIT B"/>
    <property type="match status" value="1"/>
</dbReference>
<dbReference type="Pfam" id="PF14697">
    <property type="entry name" value="Fer4_21"/>
    <property type="match status" value="1"/>
</dbReference>
<dbReference type="Pfam" id="PF04060">
    <property type="entry name" value="FeS"/>
    <property type="match status" value="1"/>
</dbReference>
<dbReference type="PIRSF" id="PIRSF005784">
    <property type="entry name" value="Elect_transpt_RnfB"/>
    <property type="match status" value="1"/>
</dbReference>
<dbReference type="SUPFAM" id="SSF54862">
    <property type="entry name" value="4Fe-4S ferredoxins"/>
    <property type="match status" value="1"/>
</dbReference>
<dbReference type="PROSITE" id="PS51656">
    <property type="entry name" value="4FE4S"/>
    <property type="match status" value="1"/>
</dbReference>
<dbReference type="PROSITE" id="PS00198">
    <property type="entry name" value="4FE4S_FER_1"/>
    <property type="match status" value="2"/>
</dbReference>
<dbReference type="PROSITE" id="PS51379">
    <property type="entry name" value="4FE4S_FER_2"/>
    <property type="match status" value="2"/>
</dbReference>
<evidence type="ECO:0000255" key="1">
    <source>
        <dbReference type="HAMAP-Rule" id="MF_00463"/>
    </source>
</evidence>
<proteinExistence type="inferred from homology"/>
<organism>
    <name type="scientific">Escherichia coli O45:K1 (strain S88 / ExPEC)</name>
    <dbReference type="NCBI Taxonomy" id="585035"/>
    <lineage>
        <taxon>Bacteria</taxon>
        <taxon>Pseudomonadati</taxon>
        <taxon>Pseudomonadota</taxon>
        <taxon>Gammaproteobacteria</taxon>
        <taxon>Enterobacterales</taxon>
        <taxon>Enterobacteriaceae</taxon>
        <taxon>Escherichia</taxon>
    </lineage>
</organism>
<protein>
    <recommendedName>
        <fullName evidence="1">Ion-translocating oxidoreductase complex subunit B</fullName>
        <ecNumber evidence="1">7.-.-.-</ecNumber>
    </recommendedName>
    <alternativeName>
        <fullName evidence="1">Rsx electron transport complex subunit B</fullName>
    </alternativeName>
</protein>
<feature type="chain" id="PRO_1000194481" description="Ion-translocating oxidoreductase complex subunit B">
    <location>
        <begin position="1"/>
        <end position="192"/>
    </location>
</feature>
<feature type="domain" description="4Fe-4S" evidence="1">
    <location>
        <begin position="32"/>
        <end position="91"/>
    </location>
</feature>
<feature type="domain" description="4Fe-4S ferredoxin-type 1" evidence="1">
    <location>
        <begin position="108"/>
        <end position="137"/>
    </location>
</feature>
<feature type="domain" description="4Fe-4S ferredoxin-type 2" evidence="1">
    <location>
        <begin position="138"/>
        <end position="167"/>
    </location>
</feature>
<feature type="region of interest" description="Hydrophobic" evidence="1">
    <location>
        <begin position="1"/>
        <end position="26"/>
    </location>
</feature>
<feature type="binding site" evidence="1">
    <location>
        <position position="49"/>
    </location>
    <ligand>
        <name>[4Fe-4S] cluster</name>
        <dbReference type="ChEBI" id="CHEBI:49883"/>
        <label>1</label>
    </ligand>
</feature>
<feature type="binding site" evidence="1">
    <location>
        <position position="52"/>
    </location>
    <ligand>
        <name>[4Fe-4S] cluster</name>
        <dbReference type="ChEBI" id="CHEBI:49883"/>
        <label>1</label>
    </ligand>
</feature>
<feature type="binding site" evidence="1">
    <location>
        <position position="57"/>
    </location>
    <ligand>
        <name>[4Fe-4S] cluster</name>
        <dbReference type="ChEBI" id="CHEBI:49883"/>
        <label>1</label>
    </ligand>
</feature>
<feature type="binding site" evidence="1">
    <location>
        <position position="74"/>
    </location>
    <ligand>
        <name>[4Fe-4S] cluster</name>
        <dbReference type="ChEBI" id="CHEBI:49883"/>
        <label>1</label>
    </ligand>
</feature>
<feature type="binding site" evidence="1">
    <location>
        <position position="117"/>
    </location>
    <ligand>
        <name>[4Fe-4S] cluster</name>
        <dbReference type="ChEBI" id="CHEBI:49883"/>
        <label>2</label>
    </ligand>
</feature>
<feature type="binding site" evidence="1">
    <location>
        <position position="120"/>
    </location>
    <ligand>
        <name>[4Fe-4S] cluster</name>
        <dbReference type="ChEBI" id="CHEBI:49883"/>
        <label>2</label>
    </ligand>
</feature>
<feature type="binding site" evidence="1">
    <location>
        <position position="123"/>
    </location>
    <ligand>
        <name>[4Fe-4S] cluster</name>
        <dbReference type="ChEBI" id="CHEBI:49883"/>
        <label>2</label>
    </ligand>
</feature>
<feature type="binding site" evidence="1">
    <location>
        <position position="127"/>
    </location>
    <ligand>
        <name>[4Fe-4S] cluster</name>
        <dbReference type="ChEBI" id="CHEBI:49883"/>
        <label>3</label>
    </ligand>
</feature>
<feature type="binding site" evidence="1">
    <location>
        <position position="147"/>
    </location>
    <ligand>
        <name>[4Fe-4S] cluster</name>
        <dbReference type="ChEBI" id="CHEBI:49883"/>
        <label>3</label>
    </ligand>
</feature>
<feature type="binding site" evidence="1">
    <location>
        <position position="150"/>
    </location>
    <ligand>
        <name>[4Fe-4S] cluster</name>
        <dbReference type="ChEBI" id="CHEBI:49883"/>
        <label>3</label>
    </ligand>
</feature>
<feature type="binding site" evidence="1">
    <location>
        <position position="153"/>
    </location>
    <ligand>
        <name>[4Fe-4S] cluster</name>
        <dbReference type="ChEBI" id="CHEBI:49883"/>
        <label>3</label>
    </ligand>
</feature>
<feature type="binding site" evidence="1">
    <location>
        <position position="157"/>
    </location>
    <ligand>
        <name>[4Fe-4S] cluster</name>
        <dbReference type="ChEBI" id="CHEBI:49883"/>
        <label>2</label>
    </ligand>
</feature>
<gene>
    <name evidence="1" type="primary">rsxB</name>
    <name type="ordered locus">ECS88_1676</name>
</gene>
<accession>B7M9Y2</accession>
<sequence>MNAIWIAVAAVSLLGLAFGAILGYASRRFAVEDDPVVEKIDEILPQSQCGQCGYPGCRPYAEAISCNGEKINRCAPGGEAVMLKIAELLNVEPQPLDGEAQELTPARMVAVIDENNCIGCTKCIQACPVDAIVGATRAMHTVMSDLCTGCNLCVDPCPTHCISLQPVAETPDSWKWDLNTIPVRIIPVEHHA</sequence>